<name>SUCC_CHLAD</name>
<comment type="function">
    <text evidence="1">Succinyl-CoA synthetase functions in the citric acid cycle (TCA), coupling the hydrolysis of succinyl-CoA to the synthesis of either ATP or GTP and thus represents the only step of substrate-level phosphorylation in the TCA. The beta subunit provides nucleotide specificity of the enzyme and binds the substrate succinate, while the binding sites for coenzyme A and phosphate are found in the alpha subunit.</text>
</comment>
<comment type="catalytic activity">
    <reaction evidence="1">
        <text>succinate + ATP + CoA = succinyl-CoA + ADP + phosphate</text>
        <dbReference type="Rhea" id="RHEA:17661"/>
        <dbReference type="ChEBI" id="CHEBI:30031"/>
        <dbReference type="ChEBI" id="CHEBI:30616"/>
        <dbReference type="ChEBI" id="CHEBI:43474"/>
        <dbReference type="ChEBI" id="CHEBI:57287"/>
        <dbReference type="ChEBI" id="CHEBI:57292"/>
        <dbReference type="ChEBI" id="CHEBI:456216"/>
        <dbReference type="EC" id="6.2.1.5"/>
    </reaction>
    <physiologicalReaction direction="right-to-left" evidence="1">
        <dbReference type="Rhea" id="RHEA:17663"/>
    </physiologicalReaction>
</comment>
<comment type="catalytic activity">
    <reaction evidence="1">
        <text>GTP + succinate + CoA = succinyl-CoA + GDP + phosphate</text>
        <dbReference type="Rhea" id="RHEA:22120"/>
        <dbReference type="ChEBI" id="CHEBI:30031"/>
        <dbReference type="ChEBI" id="CHEBI:37565"/>
        <dbReference type="ChEBI" id="CHEBI:43474"/>
        <dbReference type="ChEBI" id="CHEBI:57287"/>
        <dbReference type="ChEBI" id="CHEBI:57292"/>
        <dbReference type="ChEBI" id="CHEBI:58189"/>
    </reaction>
    <physiologicalReaction direction="right-to-left" evidence="1">
        <dbReference type="Rhea" id="RHEA:22122"/>
    </physiologicalReaction>
</comment>
<comment type="cofactor">
    <cofactor evidence="1">
        <name>Mg(2+)</name>
        <dbReference type="ChEBI" id="CHEBI:18420"/>
    </cofactor>
    <text evidence="1">Binds 1 Mg(2+) ion per subunit.</text>
</comment>
<comment type="pathway">
    <text evidence="1">Carbohydrate metabolism; tricarboxylic acid cycle; succinate from succinyl-CoA (ligase route): step 1/1.</text>
</comment>
<comment type="subunit">
    <text evidence="1">Heterotetramer of two alpha and two beta subunits.</text>
</comment>
<comment type="similarity">
    <text evidence="1">Belongs to the succinate/malate CoA ligase beta subunit family.</text>
</comment>
<feature type="chain" id="PRO_1000197701" description="Succinate--CoA ligase [ADP-forming] subunit beta">
    <location>
        <begin position="1"/>
        <end position="382"/>
    </location>
</feature>
<feature type="domain" description="ATP-grasp" evidence="1">
    <location>
        <begin position="9"/>
        <end position="237"/>
    </location>
</feature>
<feature type="binding site" evidence="1">
    <location>
        <position position="45"/>
    </location>
    <ligand>
        <name>ATP</name>
        <dbReference type="ChEBI" id="CHEBI:30616"/>
    </ligand>
</feature>
<feature type="binding site" evidence="1">
    <location>
        <begin position="52"/>
        <end position="54"/>
    </location>
    <ligand>
        <name>ATP</name>
        <dbReference type="ChEBI" id="CHEBI:30616"/>
    </ligand>
</feature>
<feature type="binding site" evidence="1">
    <location>
        <position position="94"/>
    </location>
    <ligand>
        <name>ATP</name>
        <dbReference type="ChEBI" id="CHEBI:30616"/>
    </ligand>
</feature>
<feature type="binding site" evidence="1">
    <location>
        <position position="99"/>
    </location>
    <ligand>
        <name>ATP</name>
        <dbReference type="ChEBI" id="CHEBI:30616"/>
    </ligand>
</feature>
<feature type="binding site" evidence="1">
    <location>
        <position position="192"/>
    </location>
    <ligand>
        <name>Mg(2+)</name>
        <dbReference type="ChEBI" id="CHEBI:18420"/>
    </ligand>
</feature>
<feature type="binding site" evidence="1">
    <location>
        <position position="206"/>
    </location>
    <ligand>
        <name>Mg(2+)</name>
        <dbReference type="ChEBI" id="CHEBI:18420"/>
    </ligand>
</feature>
<feature type="binding site" evidence="1">
    <location>
        <position position="257"/>
    </location>
    <ligand>
        <name>substrate</name>
        <note>ligand shared with subunit alpha</note>
    </ligand>
</feature>
<feature type="binding site" evidence="1">
    <location>
        <begin position="314"/>
        <end position="316"/>
    </location>
    <ligand>
        <name>substrate</name>
        <note>ligand shared with subunit alpha</note>
    </ligand>
</feature>
<reference key="1">
    <citation type="submission" date="2008-12" db="EMBL/GenBank/DDBJ databases">
        <title>Complete sequence of Chloroflexus aggregans DSM 9485.</title>
        <authorList>
            <consortium name="US DOE Joint Genome Institute"/>
            <person name="Lucas S."/>
            <person name="Copeland A."/>
            <person name="Lapidus A."/>
            <person name="Glavina del Rio T."/>
            <person name="Dalin E."/>
            <person name="Tice H."/>
            <person name="Pitluck S."/>
            <person name="Foster B."/>
            <person name="Larimer F."/>
            <person name="Land M."/>
            <person name="Hauser L."/>
            <person name="Kyrpides N."/>
            <person name="Mikhailova N."/>
            <person name="Bryant D.A."/>
            <person name="Richardson P."/>
        </authorList>
    </citation>
    <scope>NUCLEOTIDE SEQUENCE [LARGE SCALE GENOMIC DNA]</scope>
    <source>
        <strain>MD-66 / DSM 9485</strain>
    </source>
</reference>
<gene>
    <name evidence="1" type="primary">sucC</name>
    <name type="ordered locus">Cagg_2086</name>
</gene>
<accession>B8GCC9</accession>
<proteinExistence type="inferred from homology"/>
<protein>
    <recommendedName>
        <fullName evidence="1">Succinate--CoA ligase [ADP-forming] subunit beta</fullName>
        <ecNumber evidence="1">6.2.1.5</ecNumber>
    </recommendedName>
    <alternativeName>
        <fullName evidence="1">Succinyl-CoA synthetase subunit beta</fullName>
        <shortName evidence="1">SCS-beta</shortName>
    </alternativeName>
</protein>
<sequence length="382" mass="39910">MKLHEYQARDLLARYGIPVTGGGVAVTPAEAHAIAEQIGGPVVVKAQVHVGGRGKAGGVKLAQTPAEAEQVAGQILGMNIKGLTVEKVLVAEAISYERELYLSAILDRGSKRITMIASAEGGVEIEEVAKTNPSAIVKIAAHPTMGLLDFQARELAFRIGLRDGKQARQFAQIAGALYRAFVESDASLAEINPLVIKNDGNLLALDSKVLLDESGLFRHPDLAALRDPSAEPEAERRAREADITFIKLDGNIGCMVNGAGLAMATMDVIKLSGGEPANFLDIGGGAGKEKVKAALQIILSDPNVKAVLFNIFGGITRVDEVARGILAALEEVPTDVPMVARLVGTNEEVGRALLAGSKLIPAATLAEGAQKAVAAARGELVS</sequence>
<keyword id="KW-0067">ATP-binding</keyword>
<keyword id="KW-0436">Ligase</keyword>
<keyword id="KW-0460">Magnesium</keyword>
<keyword id="KW-0479">Metal-binding</keyword>
<keyword id="KW-0547">Nucleotide-binding</keyword>
<keyword id="KW-0816">Tricarboxylic acid cycle</keyword>
<evidence type="ECO:0000255" key="1">
    <source>
        <dbReference type="HAMAP-Rule" id="MF_00558"/>
    </source>
</evidence>
<dbReference type="EC" id="6.2.1.5" evidence="1"/>
<dbReference type="EMBL" id="CP001337">
    <property type="protein sequence ID" value="ACL24973.1"/>
    <property type="molecule type" value="Genomic_DNA"/>
</dbReference>
<dbReference type="RefSeq" id="WP_015940831.1">
    <property type="nucleotide sequence ID" value="NC_011831.1"/>
</dbReference>
<dbReference type="SMR" id="B8GCC9"/>
<dbReference type="STRING" id="326427.Cagg_2086"/>
<dbReference type="KEGG" id="cag:Cagg_2086"/>
<dbReference type="eggNOG" id="COG0045">
    <property type="taxonomic scope" value="Bacteria"/>
</dbReference>
<dbReference type="HOGENOM" id="CLU_037430_0_2_0"/>
<dbReference type="OrthoDB" id="9802602at2"/>
<dbReference type="UniPathway" id="UPA00223">
    <property type="reaction ID" value="UER00999"/>
</dbReference>
<dbReference type="Proteomes" id="UP000002508">
    <property type="component" value="Chromosome"/>
</dbReference>
<dbReference type="GO" id="GO:0005829">
    <property type="term" value="C:cytosol"/>
    <property type="evidence" value="ECO:0007669"/>
    <property type="project" value="TreeGrafter"/>
</dbReference>
<dbReference type="GO" id="GO:0042709">
    <property type="term" value="C:succinate-CoA ligase complex"/>
    <property type="evidence" value="ECO:0007669"/>
    <property type="project" value="TreeGrafter"/>
</dbReference>
<dbReference type="GO" id="GO:0005524">
    <property type="term" value="F:ATP binding"/>
    <property type="evidence" value="ECO:0007669"/>
    <property type="project" value="UniProtKB-UniRule"/>
</dbReference>
<dbReference type="GO" id="GO:0000287">
    <property type="term" value="F:magnesium ion binding"/>
    <property type="evidence" value="ECO:0007669"/>
    <property type="project" value="UniProtKB-UniRule"/>
</dbReference>
<dbReference type="GO" id="GO:0004775">
    <property type="term" value="F:succinate-CoA ligase (ADP-forming) activity"/>
    <property type="evidence" value="ECO:0007669"/>
    <property type="project" value="UniProtKB-UniRule"/>
</dbReference>
<dbReference type="GO" id="GO:0004776">
    <property type="term" value="F:succinate-CoA ligase (GDP-forming) activity"/>
    <property type="evidence" value="ECO:0007669"/>
    <property type="project" value="RHEA"/>
</dbReference>
<dbReference type="GO" id="GO:0006104">
    <property type="term" value="P:succinyl-CoA metabolic process"/>
    <property type="evidence" value="ECO:0007669"/>
    <property type="project" value="TreeGrafter"/>
</dbReference>
<dbReference type="GO" id="GO:0006099">
    <property type="term" value="P:tricarboxylic acid cycle"/>
    <property type="evidence" value="ECO:0007669"/>
    <property type="project" value="UniProtKB-UniRule"/>
</dbReference>
<dbReference type="FunFam" id="3.30.1490.20:FF:000014">
    <property type="entry name" value="Succinate--CoA ligase [ADP-forming] subunit beta"/>
    <property type="match status" value="1"/>
</dbReference>
<dbReference type="FunFam" id="3.30.470.20:FF:000002">
    <property type="entry name" value="Succinate--CoA ligase [ADP-forming] subunit beta"/>
    <property type="match status" value="1"/>
</dbReference>
<dbReference type="FunFam" id="3.40.50.261:FF:000001">
    <property type="entry name" value="Succinate--CoA ligase [ADP-forming] subunit beta"/>
    <property type="match status" value="1"/>
</dbReference>
<dbReference type="Gene3D" id="3.30.1490.20">
    <property type="entry name" value="ATP-grasp fold, A domain"/>
    <property type="match status" value="1"/>
</dbReference>
<dbReference type="Gene3D" id="3.30.470.20">
    <property type="entry name" value="ATP-grasp fold, B domain"/>
    <property type="match status" value="1"/>
</dbReference>
<dbReference type="Gene3D" id="3.40.50.261">
    <property type="entry name" value="Succinyl-CoA synthetase domains"/>
    <property type="match status" value="1"/>
</dbReference>
<dbReference type="HAMAP" id="MF_00558">
    <property type="entry name" value="Succ_CoA_beta"/>
    <property type="match status" value="1"/>
</dbReference>
<dbReference type="InterPro" id="IPR011761">
    <property type="entry name" value="ATP-grasp"/>
</dbReference>
<dbReference type="InterPro" id="IPR013650">
    <property type="entry name" value="ATP-grasp_succ-CoA_synth-type"/>
</dbReference>
<dbReference type="InterPro" id="IPR013815">
    <property type="entry name" value="ATP_grasp_subdomain_1"/>
</dbReference>
<dbReference type="InterPro" id="IPR017866">
    <property type="entry name" value="Succ-CoA_synthase_bsu_CS"/>
</dbReference>
<dbReference type="InterPro" id="IPR005811">
    <property type="entry name" value="SUCC_ACL_C"/>
</dbReference>
<dbReference type="InterPro" id="IPR005809">
    <property type="entry name" value="Succ_CoA_ligase-like_bsu"/>
</dbReference>
<dbReference type="InterPro" id="IPR016102">
    <property type="entry name" value="Succinyl-CoA_synth-like"/>
</dbReference>
<dbReference type="NCBIfam" id="NF001913">
    <property type="entry name" value="PRK00696.1"/>
    <property type="match status" value="1"/>
</dbReference>
<dbReference type="NCBIfam" id="TIGR01016">
    <property type="entry name" value="sucCoAbeta"/>
    <property type="match status" value="1"/>
</dbReference>
<dbReference type="PANTHER" id="PTHR11815:SF10">
    <property type="entry name" value="SUCCINATE--COA LIGASE [GDP-FORMING] SUBUNIT BETA, MITOCHONDRIAL"/>
    <property type="match status" value="1"/>
</dbReference>
<dbReference type="PANTHER" id="PTHR11815">
    <property type="entry name" value="SUCCINYL-COA SYNTHETASE BETA CHAIN"/>
    <property type="match status" value="1"/>
</dbReference>
<dbReference type="Pfam" id="PF08442">
    <property type="entry name" value="ATP-grasp_2"/>
    <property type="match status" value="1"/>
</dbReference>
<dbReference type="Pfam" id="PF00549">
    <property type="entry name" value="Ligase_CoA"/>
    <property type="match status" value="1"/>
</dbReference>
<dbReference type="PIRSF" id="PIRSF001554">
    <property type="entry name" value="SucCS_beta"/>
    <property type="match status" value="1"/>
</dbReference>
<dbReference type="SUPFAM" id="SSF56059">
    <property type="entry name" value="Glutathione synthetase ATP-binding domain-like"/>
    <property type="match status" value="1"/>
</dbReference>
<dbReference type="SUPFAM" id="SSF52210">
    <property type="entry name" value="Succinyl-CoA synthetase domains"/>
    <property type="match status" value="1"/>
</dbReference>
<dbReference type="PROSITE" id="PS50975">
    <property type="entry name" value="ATP_GRASP"/>
    <property type="match status" value="1"/>
</dbReference>
<dbReference type="PROSITE" id="PS01217">
    <property type="entry name" value="SUCCINYL_COA_LIG_3"/>
    <property type="match status" value="1"/>
</dbReference>
<organism>
    <name type="scientific">Chloroflexus aggregans (strain MD-66 / DSM 9485)</name>
    <dbReference type="NCBI Taxonomy" id="326427"/>
    <lineage>
        <taxon>Bacteria</taxon>
        <taxon>Bacillati</taxon>
        <taxon>Chloroflexota</taxon>
        <taxon>Chloroflexia</taxon>
        <taxon>Chloroflexales</taxon>
        <taxon>Chloroflexineae</taxon>
        <taxon>Chloroflexaceae</taxon>
        <taxon>Chloroflexus</taxon>
    </lineage>
</organism>